<reference key="1">
    <citation type="journal article" date="1995" name="Mol. Microbiol.">
        <title>yst gene expression in Yersinia enterocolitica is positively regulated by a chromosomal region that is highly homologous to Escherichia coli host factor 1 gene (hfq).</title>
        <authorList>
            <person name="Nakao H."/>
            <person name="Watanabe H."/>
            <person name="Nakayama S."/>
            <person name="Takeda T."/>
        </authorList>
    </citation>
    <scope>NUCLEOTIDE SEQUENCE [GENOMIC DNA]</scope>
    <source>
        <strain>86-8</strain>
    </source>
</reference>
<evidence type="ECO:0000250" key="1"/>
<evidence type="ECO:0000255" key="2">
    <source>
        <dbReference type="HAMAP-Rule" id="MF_00436"/>
    </source>
</evidence>
<evidence type="ECO:0000255" key="3">
    <source>
        <dbReference type="PROSITE-ProRule" id="PRU01346"/>
    </source>
</evidence>
<evidence type="ECO:0000256" key="4">
    <source>
        <dbReference type="SAM" id="MobiDB-lite"/>
    </source>
</evidence>
<sequence length="101" mass="11143">MAKGQSLQDPFLNALRRERVPVSIYLVNGIKLQGQVESFDQFVILLKNTVSQMVYKHAISTVVPSRPVSHHSNNPSGSTNNYHGSNPSAPQQPQQDSDDAE</sequence>
<name>HFQ_YEREN</name>
<keyword id="KW-0694">RNA-binding</keyword>
<keyword id="KW-0346">Stress response</keyword>
<gene>
    <name evidence="2" type="primary">hfq</name>
    <name type="synonym">ymr</name>
    <name type="synonym">yrp</name>
</gene>
<accession>Q56928</accession>
<proteinExistence type="inferred from homology"/>
<dbReference type="EMBL" id="D28762">
    <property type="protein sequence ID" value="BAA05952.1"/>
    <property type="molecule type" value="Genomic_DNA"/>
</dbReference>
<dbReference type="PIR" id="S70842">
    <property type="entry name" value="S70842"/>
</dbReference>
<dbReference type="RefSeq" id="WP_004392473.1">
    <property type="nucleotide sequence ID" value="NZ_WJHZ01000012.1"/>
</dbReference>
<dbReference type="SMR" id="Q56928"/>
<dbReference type="STRING" id="1443113.LC20_04803"/>
<dbReference type="GeneID" id="97457924"/>
<dbReference type="eggNOG" id="COG1923">
    <property type="taxonomic scope" value="Bacteria"/>
</dbReference>
<dbReference type="OMA" id="QQMVYKH"/>
<dbReference type="PHI-base" id="PHI:6403"/>
<dbReference type="GO" id="GO:0005829">
    <property type="term" value="C:cytosol"/>
    <property type="evidence" value="ECO:0007669"/>
    <property type="project" value="TreeGrafter"/>
</dbReference>
<dbReference type="GO" id="GO:0003723">
    <property type="term" value="F:RNA binding"/>
    <property type="evidence" value="ECO:0007669"/>
    <property type="project" value="UniProtKB-UniRule"/>
</dbReference>
<dbReference type="GO" id="GO:0006355">
    <property type="term" value="P:regulation of DNA-templated transcription"/>
    <property type="evidence" value="ECO:0007669"/>
    <property type="project" value="InterPro"/>
</dbReference>
<dbReference type="GO" id="GO:0043487">
    <property type="term" value="P:regulation of RNA stability"/>
    <property type="evidence" value="ECO:0007669"/>
    <property type="project" value="TreeGrafter"/>
</dbReference>
<dbReference type="GO" id="GO:0045974">
    <property type="term" value="P:regulation of translation, ncRNA-mediated"/>
    <property type="evidence" value="ECO:0007669"/>
    <property type="project" value="TreeGrafter"/>
</dbReference>
<dbReference type="CDD" id="cd01716">
    <property type="entry name" value="Hfq"/>
    <property type="match status" value="1"/>
</dbReference>
<dbReference type="FunFam" id="2.30.30.100:FF:000001">
    <property type="entry name" value="RNA-binding protein Hfq"/>
    <property type="match status" value="1"/>
</dbReference>
<dbReference type="Gene3D" id="2.30.30.100">
    <property type="match status" value="1"/>
</dbReference>
<dbReference type="HAMAP" id="MF_00436">
    <property type="entry name" value="Hfq"/>
    <property type="match status" value="1"/>
</dbReference>
<dbReference type="InterPro" id="IPR005001">
    <property type="entry name" value="Hfq"/>
</dbReference>
<dbReference type="InterPro" id="IPR010920">
    <property type="entry name" value="LSM_dom_sf"/>
</dbReference>
<dbReference type="InterPro" id="IPR047575">
    <property type="entry name" value="Sm"/>
</dbReference>
<dbReference type="NCBIfam" id="TIGR02383">
    <property type="entry name" value="Hfq"/>
    <property type="match status" value="1"/>
</dbReference>
<dbReference type="NCBIfam" id="NF001602">
    <property type="entry name" value="PRK00395.1"/>
    <property type="match status" value="1"/>
</dbReference>
<dbReference type="PANTHER" id="PTHR34772">
    <property type="entry name" value="RNA-BINDING PROTEIN HFQ"/>
    <property type="match status" value="1"/>
</dbReference>
<dbReference type="PANTHER" id="PTHR34772:SF1">
    <property type="entry name" value="RNA-BINDING PROTEIN HFQ"/>
    <property type="match status" value="1"/>
</dbReference>
<dbReference type="Pfam" id="PF17209">
    <property type="entry name" value="Hfq"/>
    <property type="match status" value="1"/>
</dbReference>
<dbReference type="SUPFAM" id="SSF50182">
    <property type="entry name" value="Sm-like ribonucleoproteins"/>
    <property type="match status" value="1"/>
</dbReference>
<dbReference type="PROSITE" id="PS52002">
    <property type="entry name" value="SM"/>
    <property type="match status" value="1"/>
</dbReference>
<protein>
    <recommendedName>
        <fullName evidence="2">RNA-binding protein Hfq</fullName>
    </recommendedName>
    <alternativeName>
        <fullName>Yersinia multiple regulator</fullName>
    </alternativeName>
    <alternativeName>
        <fullName>Yersinia regulator for pleiotropic phenotype</fullName>
    </alternativeName>
</protein>
<organism>
    <name type="scientific">Yersinia enterocolitica</name>
    <dbReference type="NCBI Taxonomy" id="630"/>
    <lineage>
        <taxon>Bacteria</taxon>
        <taxon>Pseudomonadati</taxon>
        <taxon>Pseudomonadota</taxon>
        <taxon>Gammaproteobacteria</taxon>
        <taxon>Enterobacterales</taxon>
        <taxon>Yersiniaceae</taxon>
        <taxon>Yersinia</taxon>
    </lineage>
</organism>
<feature type="initiator methionine" description="Removed" evidence="1">
    <location>
        <position position="1"/>
    </location>
</feature>
<feature type="chain" id="PRO_0000095608" description="RNA-binding protein Hfq">
    <location>
        <begin position="2"/>
        <end position="101"/>
    </location>
</feature>
<feature type="domain" description="Sm" evidence="3">
    <location>
        <begin position="9"/>
        <end position="68"/>
    </location>
</feature>
<feature type="region of interest" description="Disordered" evidence="4">
    <location>
        <begin position="63"/>
        <end position="101"/>
    </location>
</feature>
<feature type="compositionally biased region" description="Polar residues" evidence="4">
    <location>
        <begin position="70"/>
        <end position="86"/>
    </location>
</feature>
<comment type="function">
    <text evidence="2">RNA chaperone that binds small regulatory RNA (sRNAs) and mRNAs to facilitate mRNA translational regulation in response to envelope stress, environmental stress and changes in metabolite concentrations. Also binds with high specificity to tRNAs (By similarity). Positively regulates the expression of the yst gene for heat-stable enterotoxin (Y-ST).</text>
</comment>
<comment type="subunit">
    <text evidence="2">Homohexamer.</text>
</comment>
<comment type="similarity">
    <text evidence="2">Belongs to the Hfq family.</text>
</comment>